<comment type="function">
    <text evidence="1">Catalyzes the transfer of the phosphoribosyl group of 5-phosphorylribose-1-pyrophosphate (PRPP) to anthranilate to yield N-(5'-phosphoribosyl)-anthranilate (PRA).</text>
</comment>
<comment type="catalytic activity">
    <reaction evidence="1">
        <text>N-(5-phospho-beta-D-ribosyl)anthranilate + diphosphate = 5-phospho-alpha-D-ribose 1-diphosphate + anthranilate</text>
        <dbReference type="Rhea" id="RHEA:11768"/>
        <dbReference type="ChEBI" id="CHEBI:16567"/>
        <dbReference type="ChEBI" id="CHEBI:18277"/>
        <dbReference type="ChEBI" id="CHEBI:33019"/>
        <dbReference type="ChEBI" id="CHEBI:58017"/>
        <dbReference type="EC" id="2.4.2.18"/>
    </reaction>
</comment>
<comment type="cofactor">
    <cofactor evidence="1">
        <name>Mg(2+)</name>
        <dbReference type="ChEBI" id="CHEBI:18420"/>
    </cofactor>
    <text evidence="1">Binds 2 magnesium ions per monomer.</text>
</comment>
<comment type="pathway">
    <text evidence="1">Amino-acid biosynthesis; L-tryptophan biosynthesis; L-tryptophan from chorismate: step 2/5.</text>
</comment>
<comment type="subunit">
    <text evidence="1">Homodimer.</text>
</comment>
<comment type="similarity">
    <text evidence="1">Belongs to the anthranilate phosphoribosyltransferase family.</text>
</comment>
<evidence type="ECO:0000255" key="1">
    <source>
        <dbReference type="HAMAP-Rule" id="MF_00211"/>
    </source>
</evidence>
<dbReference type="EC" id="2.4.2.18" evidence="1"/>
<dbReference type="EMBL" id="CP001176">
    <property type="protein sequence ID" value="ACK62421.1"/>
    <property type="molecule type" value="Genomic_DNA"/>
</dbReference>
<dbReference type="RefSeq" id="WP_001067365.1">
    <property type="nucleotide sequence ID" value="NC_011725.1"/>
</dbReference>
<dbReference type="SMR" id="B7HGZ8"/>
<dbReference type="KEGG" id="bcb:BCB4264_A1293"/>
<dbReference type="HOGENOM" id="CLU_034315_2_1_9"/>
<dbReference type="UniPathway" id="UPA00035">
    <property type="reaction ID" value="UER00041"/>
</dbReference>
<dbReference type="Proteomes" id="UP000007096">
    <property type="component" value="Chromosome"/>
</dbReference>
<dbReference type="GO" id="GO:0005829">
    <property type="term" value="C:cytosol"/>
    <property type="evidence" value="ECO:0007669"/>
    <property type="project" value="TreeGrafter"/>
</dbReference>
<dbReference type="GO" id="GO:0004048">
    <property type="term" value="F:anthranilate phosphoribosyltransferase activity"/>
    <property type="evidence" value="ECO:0007669"/>
    <property type="project" value="UniProtKB-UniRule"/>
</dbReference>
<dbReference type="GO" id="GO:0000287">
    <property type="term" value="F:magnesium ion binding"/>
    <property type="evidence" value="ECO:0007669"/>
    <property type="project" value="UniProtKB-UniRule"/>
</dbReference>
<dbReference type="GO" id="GO:0000162">
    <property type="term" value="P:L-tryptophan biosynthetic process"/>
    <property type="evidence" value="ECO:0007669"/>
    <property type="project" value="UniProtKB-UniRule"/>
</dbReference>
<dbReference type="FunFam" id="3.40.1030.10:FF:000002">
    <property type="entry name" value="Anthranilate phosphoribosyltransferase"/>
    <property type="match status" value="1"/>
</dbReference>
<dbReference type="Gene3D" id="3.40.1030.10">
    <property type="entry name" value="Nucleoside phosphorylase/phosphoribosyltransferase catalytic domain"/>
    <property type="match status" value="1"/>
</dbReference>
<dbReference type="Gene3D" id="1.20.970.10">
    <property type="entry name" value="Transferase, Pyrimidine Nucleoside Phosphorylase, Chain C"/>
    <property type="match status" value="1"/>
</dbReference>
<dbReference type="HAMAP" id="MF_00211">
    <property type="entry name" value="TrpD"/>
    <property type="match status" value="1"/>
</dbReference>
<dbReference type="InterPro" id="IPR005940">
    <property type="entry name" value="Anthranilate_Pribosyl_Tfrase"/>
</dbReference>
<dbReference type="InterPro" id="IPR000312">
    <property type="entry name" value="Glycosyl_Trfase_fam3"/>
</dbReference>
<dbReference type="InterPro" id="IPR017459">
    <property type="entry name" value="Glycosyl_Trfase_fam3_N_dom"/>
</dbReference>
<dbReference type="InterPro" id="IPR036320">
    <property type="entry name" value="Glycosyl_Trfase_fam3_N_dom_sf"/>
</dbReference>
<dbReference type="InterPro" id="IPR035902">
    <property type="entry name" value="Nuc_phospho_transferase"/>
</dbReference>
<dbReference type="NCBIfam" id="TIGR01245">
    <property type="entry name" value="trpD"/>
    <property type="match status" value="1"/>
</dbReference>
<dbReference type="PANTHER" id="PTHR43285">
    <property type="entry name" value="ANTHRANILATE PHOSPHORIBOSYLTRANSFERASE"/>
    <property type="match status" value="1"/>
</dbReference>
<dbReference type="PANTHER" id="PTHR43285:SF2">
    <property type="entry name" value="ANTHRANILATE PHOSPHORIBOSYLTRANSFERASE"/>
    <property type="match status" value="1"/>
</dbReference>
<dbReference type="Pfam" id="PF02885">
    <property type="entry name" value="Glycos_trans_3N"/>
    <property type="match status" value="1"/>
</dbReference>
<dbReference type="Pfam" id="PF00591">
    <property type="entry name" value="Glycos_transf_3"/>
    <property type="match status" value="1"/>
</dbReference>
<dbReference type="SUPFAM" id="SSF52418">
    <property type="entry name" value="Nucleoside phosphorylase/phosphoribosyltransferase catalytic domain"/>
    <property type="match status" value="1"/>
</dbReference>
<dbReference type="SUPFAM" id="SSF47648">
    <property type="entry name" value="Nucleoside phosphorylase/phosphoribosyltransferase N-terminal domain"/>
    <property type="match status" value="1"/>
</dbReference>
<proteinExistence type="inferred from homology"/>
<organism>
    <name type="scientific">Bacillus cereus (strain B4264)</name>
    <dbReference type="NCBI Taxonomy" id="405532"/>
    <lineage>
        <taxon>Bacteria</taxon>
        <taxon>Bacillati</taxon>
        <taxon>Bacillota</taxon>
        <taxon>Bacilli</taxon>
        <taxon>Bacillales</taxon>
        <taxon>Bacillaceae</taxon>
        <taxon>Bacillus</taxon>
        <taxon>Bacillus cereus group</taxon>
    </lineage>
</organism>
<accession>B7HGZ8</accession>
<gene>
    <name evidence="1" type="primary">trpD</name>
    <name type="ordered locus">BCB4264_A1293</name>
</gene>
<protein>
    <recommendedName>
        <fullName evidence="1">Anthranilate phosphoribosyltransferase</fullName>
        <ecNumber evidence="1">2.4.2.18</ecNumber>
    </recommendedName>
</protein>
<sequence>MNNYLRKLVEGQHLTEEEMYKAGLLLLSENILESEIAAFLVLLKAKGETAEEIYGLVRALREKALPFSNHIQGAMDNCGTGGDGAQTFNISTTSAFVLAGAGVKVAKHGNRAVSSKTGSADLLEELGVNISSTPNEIDYLLEHVGIAFLFAPVMHPALRRIMKIRKELNVPTIFNLIGPLTNPVNLETQFVGIYKRDMLLPVAEVLQKLGRKQALVVNGSGFLDEASLQGENHVVLLKDNEIVEMSIDPEKYGFSRVKNEEIRGGNSKENAKITLEVLSGEKSVYRDTVLLNAGLALFANGKTETIEEGIKLAAHSIDSGKALTKLNLLIAASNEKLERVN</sequence>
<feature type="chain" id="PRO_1000198804" description="Anthranilate phosphoribosyltransferase">
    <location>
        <begin position="1"/>
        <end position="341"/>
    </location>
</feature>
<feature type="binding site" evidence="1">
    <location>
        <position position="79"/>
    </location>
    <ligand>
        <name>5-phospho-alpha-D-ribose 1-diphosphate</name>
        <dbReference type="ChEBI" id="CHEBI:58017"/>
    </ligand>
</feature>
<feature type="binding site" evidence="1">
    <location>
        <position position="79"/>
    </location>
    <ligand>
        <name>anthranilate</name>
        <dbReference type="ChEBI" id="CHEBI:16567"/>
        <label>1</label>
    </ligand>
</feature>
<feature type="binding site" evidence="1">
    <location>
        <begin position="82"/>
        <end position="83"/>
    </location>
    <ligand>
        <name>5-phospho-alpha-D-ribose 1-diphosphate</name>
        <dbReference type="ChEBI" id="CHEBI:58017"/>
    </ligand>
</feature>
<feature type="binding site" evidence="1">
    <location>
        <position position="87"/>
    </location>
    <ligand>
        <name>5-phospho-alpha-D-ribose 1-diphosphate</name>
        <dbReference type="ChEBI" id="CHEBI:58017"/>
    </ligand>
</feature>
<feature type="binding site" evidence="1">
    <location>
        <begin position="89"/>
        <end position="92"/>
    </location>
    <ligand>
        <name>5-phospho-alpha-D-ribose 1-diphosphate</name>
        <dbReference type="ChEBI" id="CHEBI:58017"/>
    </ligand>
</feature>
<feature type="binding site" evidence="1">
    <location>
        <position position="91"/>
    </location>
    <ligand>
        <name>Mg(2+)</name>
        <dbReference type="ChEBI" id="CHEBI:18420"/>
        <label>1</label>
    </ligand>
</feature>
<feature type="binding site" evidence="1">
    <location>
        <begin position="107"/>
        <end position="115"/>
    </location>
    <ligand>
        <name>5-phospho-alpha-D-ribose 1-diphosphate</name>
        <dbReference type="ChEBI" id="CHEBI:58017"/>
    </ligand>
</feature>
<feature type="binding site" evidence="1">
    <location>
        <position position="110"/>
    </location>
    <ligand>
        <name>anthranilate</name>
        <dbReference type="ChEBI" id="CHEBI:16567"/>
        <label>1</label>
    </ligand>
</feature>
<feature type="binding site" evidence="1">
    <location>
        <position position="119"/>
    </location>
    <ligand>
        <name>5-phospho-alpha-D-ribose 1-diphosphate</name>
        <dbReference type="ChEBI" id="CHEBI:58017"/>
    </ligand>
</feature>
<feature type="binding site" evidence="1">
    <location>
        <position position="165"/>
    </location>
    <ligand>
        <name>anthranilate</name>
        <dbReference type="ChEBI" id="CHEBI:16567"/>
        <label>2</label>
    </ligand>
</feature>
<feature type="binding site" evidence="1">
    <location>
        <position position="224"/>
    </location>
    <ligand>
        <name>Mg(2+)</name>
        <dbReference type="ChEBI" id="CHEBI:18420"/>
        <label>2</label>
    </ligand>
</feature>
<feature type="binding site" evidence="1">
    <location>
        <position position="225"/>
    </location>
    <ligand>
        <name>Mg(2+)</name>
        <dbReference type="ChEBI" id="CHEBI:18420"/>
        <label>1</label>
    </ligand>
</feature>
<feature type="binding site" evidence="1">
    <location>
        <position position="225"/>
    </location>
    <ligand>
        <name>Mg(2+)</name>
        <dbReference type="ChEBI" id="CHEBI:18420"/>
        <label>2</label>
    </ligand>
</feature>
<reference key="1">
    <citation type="submission" date="2008-10" db="EMBL/GenBank/DDBJ databases">
        <title>Genome sequence of Bacillus cereus B4264.</title>
        <authorList>
            <person name="Dodson R.J."/>
            <person name="Durkin A.S."/>
            <person name="Rosovitz M.J."/>
            <person name="Rasko D.A."/>
            <person name="Hoffmaster A."/>
            <person name="Ravel J."/>
            <person name="Sutton G."/>
        </authorList>
    </citation>
    <scope>NUCLEOTIDE SEQUENCE [LARGE SCALE GENOMIC DNA]</scope>
    <source>
        <strain>B4264</strain>
    </source>
</reference>
<name>TRPD_BACC4</name>
<keyword id="KW-0028">Amino-acid biosynthesis</keyword>
<keyword id="KW-0057">Aromatic amino acid biosynthesis</keyword>
<keyword id="KW-0328">Glycosyltransferase</keyword>
<keyword id="KW-0460">Magnesium</keyword>
<keyword id="KW-0479">Metal-binding</keyword>
<keyword id="KW-0808">Transferase</keyword>
<keyword id="KW-0822">Tryptophan biosynthesis</keyword>